<reference key="1">
    <citation type="journal article" date="2002" name="J. Biol. Chem.">
        <title>Isolation of cyanophycin-degrading bacteria, cloning and characterization of an extracellular cyanophycinase gene (cphE) from Pseudomonas anguilliseptica strain BI. The cphE gene from P. anguilliseptica BI encodes a cyanophycinhydrolyzing enzyme.</title>
        <authorList>
            <person name="Obst M."/>
            <person name="Oppermann-Sanio F.B."/>
            <person name="Luftmann H."/>
            <person name="Steinbuchel A."/>
        </authorList>
    </citation>
    <scope>NUCLEOTIDE SEQUENCE [GENOMIC DNA]</scope>
    <scope>FUNCTION</scope>
    <scope>ACTIVITY REGULATION</scope>
    <scope>SUBCELLULAR LOCATION</scope>
    <source>
        <strain>BI</strain>
    </source>
</reference>
<reference key="2">
    <citation type="journal article" date="2004" name="Biomacromolecules">
        <title>Isolation and characterization of gram-positive cyanophycin-degrading bacteria-kinetic studies on cyanophycin depolymerase activity in aerobic bacteria.</title>
        <authorList>
            <person name="Obst M."/>
            <person name="Sallam A."/>
            <person name="Luftmann H."/>
            <person name="Steinbuchel A."/>
        </authorList>
    </citation>
    <scope>FUNCTION</scope>
    <scope>BIOPHYSICOCHEMICAL PROPERTIES</scope>
</reference>
<keyword id="KW-0378">Hydrolase</keyword>
<keyword id="KW-0645">Protease</keyword>
<keyword id="KW-0964">Secreted</keyword>
<keyword id="KW-0720">Serine protease</keyword>
<keyword id="KW-0732">Signal</keyword>
<feature type="signal peptide" evidence="2">
    <location>
        <begin position="1"/>
        <end position="23"/>
    </location>
</feature>
<feature type="chain" id="PRO_0000393371" description="Cyanophycinase">
    <location>
        <begin position="24"/>
        <end position="417"/>
    </location>
</feature>
<feature type="active site" description="Charge relay system" evidence="1">
    <location>
        <position position="169"/>
    </location>
</feature>
<feature type="active site" description="Charge relay system" evidence="1">
    <location>
        <position position="188"/>
    </location>
</feature>
<feature type="active site" description="Charge relay system" evidence="1">
    <location>
        <position position="222"/>
    </location>
</feature>
<name>CPHE_PSEAG</name>
<evidence type="ECO:0000250" key="1"/>
<evidence type="ECO:0000255" key="2"/>
<evidence type="ECO:0000269" key="3">
    <source>
    </source>
</evidence>
<evidence type="ECO:0000269" key="4">
    <source>
    </source>
</evidence>
<evidence type="ECO:0000305" key="5"/>
<protein>
    <recommendedName>
        <fullName>Cyanophycinase</fullName>
        <ecNumber>3.4.15.6</ecNumber>
    </recommendedName>
    <alternativeName>
        <fullName>Extracellular CGPase</fullName>
        <shortName>CPHEpa</shortName>
    </alternativeName>
    <alternativeName>
        <fullName>Extracellular cyanophycinase</fullName>
    </alternativeName>
</protein>
<comment type="function">
    <text evidence="3 4">Exopeptidase that catalyzes the hydrolytic cleavage of multi-L-arginyl-poly-L-aspartic acid (cyanophycin; a water-insoluble reserve polymer) into aspartate-arginine dipeptides.</text>
</comment>
<comment type="catalytic activity">
    <reaction>
        <text>[L-4-(L-arginin-2-N-yl)aspartate](n) + H2O = [L-4-(L-arginin-2-N-yl)aspartate](n-1) + L-4-(L-arginin-2-N-yl)aspartate</text>
        <dbReference type="Rhea" id="RHEA:12845"/>
        <dbReference type="Rhea" id="RHEA-COMP:13728"/>
        <dbReference type="Rhea" id="RHEA-COMP:13734"/>
        <dbReference type="ChEBI" id="CHEBI:15377"/>
        <dbReference type="ChEBI" id="CHEBI:137986"/>
        <dbReference type="ChEBI" id="CHEBI:137991"/>
        <dbReference type="EC" id="3.4.15.6"/>
    </reaction>
</comment>
<comment type="activity regulation">
    <text evidence="3">Inhibited by serine protease inhibitors. Inhibited by N-Bromo-succinimide.</text>
</comment>
<comment type="biophysicochemical properties">
    <kinetics>
        <KM evidence="4">1 uM for cyanophycin granule polypeptide (CGP)</KM>
    </kinetics>
</comment>
<comment type="subcellular location">
    <subcellularLocation>
        <location evidence="3">Secreted</location>
    </subcellularLocation>
</comment>
<comment type="similarity">
    <text evidence="5">Belongs to the peptidase S51 family.</text>
</comment>
<sequence length="417" mass="44767">MIRSFIRSSALLLALLPVTGYSAGPLILVGGGLKDDNTAIYQRLIQLAGGNGQARIGVITAASIPESDDPDAGTADAANSKANGEFYAQLLETYGAADAQWIPIDLDQISNNSNPQVVAQINSMTGFFFGGGDQSRLTQTLQTATRADSPALAAIRARHNAGAVLAGTSAGTAIMVQGPMVTGGESYDGLRYGVYTTPSGDDLSYDMQGGFGFFNYGLLDTHFSERGRQGRIVRLADHTQVPFAFGVDENTALLVQNNATLGQVEMEVIGENGVFIFDLRNKERGTGSTYALYDVLGSYLTAGDRYRPVTGQFVIASGKTSLRGRERYSAAMTVTTDIFSSPNNSGANGRRKPREFVKVSADLFDSRVTSTLGRTYETNPLSRRSVQKHAVRQPWLPGHRWRQEHAVLPAFADGFPS</sequence>
<proteinExistence type="evidence at protein level"/>
<organism>
    <name type="scientific">Pseudomonas anguilliseptica</name>
    <dbReference type="NCBI Taxonomy" id="53406"/>
    <lineage>
        <taxon>Bacteria</taxon>
        <taxon>Pseudomonadati</taxon>
        <taxon>Pseudomonadota</taxon>
        <taxon>Gammaproteobacteria</taxon>
        <taxon>Pseudomonadales</taxon>
        <taxon>Pseudomonadaceae</taxon>
        <taxon>Pseudomonas</taxon>
    </lineage>
</organism>
<accession>Q8KQN8</accession>
<dbReference type="EC" id="3.4.15.6"/>
<dbReference type="EMBL" id="AY065671">
    <property type="protein sequence ID" value="AAL40891.1"/>
    <property type="molecule type" value="Genomic_DNA"/>
</dbReference>
<dbReference type="SMR" id="Q8KQN8"/>
<dbReference type="KEGG" id="ag:AAL40891"/>
<dbReference type="BRENDA" id="3.4.15.6">
    <property type="organism ID" value="8025"/>
</dbReference>
<dbReference type="GO" id="GO:0005576">
    <property type="term" value="C:extracellular region"/>
    <property type="evidence" value="ECO:0007669"/>
    <property type="project" value="UniProtKB-SubCell"/>
</dbReference>
<dbReference type="GO" id="GO:0008241">
    <property type="term" value="F:peptidyl-dipeptidase activity"/>
    <property type="evidence" value="ECO:0007669"/>
    <property type="project" value="UniProtKB-EC"/>
</dbReference>
<dbReference type="GO" id="GO:0008236">
    <property type="term" value="F:serine-type peptidase activity"/>
    <property type="evidence" value="ECO:0007669"/>
    <property type="project" value="UniProtKB-KW"/>
</dbReference>
<dbReference type="GO" id="GO:0006508">
    <property type="term" value="P:proteolysis"/>
    <property type="evidence" value="ECO:0007669"/>
    <property type="project" value="UniProtKB-KW"/>
</dbReference>
<dbReference type="CDD" id="cd03145">
    <property type="entry name" value="GAT1_cyanophycinase"/>
    <property type="match status" value="1"/>
</dbReference>
<dbReference type="Gene3D" id="3.40.50.880">
    <property type="match status" value="1"/>
</dbReference>
<dbReference type="InterPro" id="IPR029062">
    <property type="entry name" value="Class_I_gatase-like"/>
</dbReference>
<dbReference type="InterPro" id="IPR005320">
    <property type="entry name" value="Peptidase_S51"/>
</dbReference>
<dbReference type="InterPro" id="IPR011811">
    <property type="entry name" value="Peptidase_S51_cyanophycinase"/>
</dbReference>
<dbReference type="PANTHER" id="PTHR36175">
    <property type="entry name" value="CYANOPHYCINASE"/>
    <property type="match status" value="1"/>
</dbReference>
<dbReference type="PANTHER" id="PTHR36175:SF1">
    <property type="entry name" value="CYANOPHYCINASE"/>
    <property type="match status" value="1"/>
</dbReference>
<dbReference type="Pfam" id="PF03575">
    <property type="entry name" value="Peptidase_S51"/>
    <property type="match status" value="1"/>
</dbReference>
<dbReference type="PIRSF" id="PIRSF032067">
    <property type="entry name" value="Cyanophycinase"/>
    <property type="match status" value="1"/>
</dbReference>
<dbReference type="SUPFAM" id="SSF52317">
    <property type="entry name" value="Class I glutamine amidotransferase-like"/>
    <property type="match status" value="1"/>
</dbReference>
<gene>
    <name type="primary">cphE</name>
</gene>